<feature type="chain" id="PRO_0000461472" description="Aflatoxin cluster transcriptional coactivator aflS">
    <location>
        <begin position="1"/>
        <end position="438"/>
    </location>
</feature>
<feature type="domain" description="HTH iclR-type" evidence="1">
    <location>
        <begin position="65"/>
        <end position="134"/>
    </location>
</feature>
<feature type="DNA-binding region" description="H-T-H motif" evidence="1">
    <location>
        <begin position="95"/>
        <end position="114"/>
    </location>
</feature>
<protein>
    <recommendedName>
        <fullName evidence="3">Aflatoxin cluster transcriptional coactivator aflS</fullName>
    </recommendedName>
    <alternativeName>
        <fullName evidence="3">Aflatoxin biosynthesis protein S</fullName>
    </alternativeName>
</protein>
<dbReference type="EMBL" id="CP044620">
    <property type="protein sequence ID" value="QRD86965.1"/>
    <property type="molecule type" value="Genomic_DNA"/>
</dbReference>
<dbReference type="RefSeq" id="XP_002379945.1">
    <property type="nucleotide sequence ID" value="XM_002379904.1"/>
</dbReference>
<dbReference type="SMR" id="A0A7U2QXY7"/>
<dbReference type="VEuPathDB" id="FungiDB:AFLA_006305"/>
<dbReference type="VEuPathDB" id="FungiDB:F9C07_7810"/>
<dbReference type="OMA" id="LLACIQW"/>
<dbReference type="Proteomes" id="UP000596276">
    <property type="component" value="Chromosome 3"/>
</dbReference>
<dbReference type="GO" id="GO:0005634">
    <property type="term" value="C:nucleus"/>
    <property type="evidence" value="ECO:0007669"/>
    <property type="project" value="UniProtKB-SubCell"/>
</dbReference>
<dbReference type="GO" id="GO:0003677">
    <property type="term" value="F:DNA binding"/>
    <property type="evidence" value="ECO:0007669"/>
    <property type="project" value="UniProtKB-KW"/>
</dbReference>
<dbReference type="FunFam" id="3.40.50.150:FF:000582">
    <property type="entry name" value="AflS/ pathway regulator"/>
    <property type="match status" value="1"/>
</dbReference>
<dbReference type="Gene3D" id="3.40.50.150">
    <property type="entry name" value="Vaccinia Virus protein VP39"/>
    <property type="match status" value="1"/>
</dbReference>
<dbReference type="Gene3D" id="1.10.10.10">
    <property type="entry name" value="Winged helix-like DNA-binding domain superfamily/Winged helix DNA-binding domain"/>
    <property type="match status" value="1"/>
</dbReference>
<dbReference type="InterPro" id="IPR029063">
    <property type="entry name" value="SAM-dependent_MTases_sf"/>
</dbReference>
<dbReference type="InterPro" id="IPR036388">
    <property type="entry name" value="WH-like_DNA-bd_sf"/>
</dbReference>
<dbReference type="InterPro" id="IPR036390">
    <property type="entry name" value="WH_DNA-bd_sf"/>
</dbReference>
<dbReference type="PANTHER" id="PTHR43712:SF15">
    <property type="entry name" value="MONODICTYPHENONE CLUSTER TRANSCRIPTIONAL COACTIVATOR MDPA"/>
    <property type="match status" value="1"/>
</dbReference>
<dbReference type="PANTHER" id="PTHR43712">
    <property type="entry name" value="PUTATIVE (AFU_ORTHOLOGUE AFUA_4G14580)-RELATED"/>
    <property type="match status" value="1"/>
</dbReference>
<dbReference type="SUPFAM" id="SSF46785">
    <property type="entry name" value="Winged helix' DNA-binding domain"/>
    <property type="match status" value="1"/>
</dbReference>
<evidence type="ECO:0000255" key="1">
    <source>
        <dbReference type="PROSITE-ProRule" id="PRU00393"/>
    </source>
</evidence>
<evidence type="ECO:0000269" key="2">
    <source>
    </source>
</evidence>
<evidence type="ECO:0000303" key="3">
    <source>
    </source>
</evidence>
<sequence>MTLTDLETCAEEIATAARTLARDGHSGGYSAGLPDHLRPVQRTLIANASQVLALASQPADLVRQLALYNQLLACLRWLGEFQVLACIPLDESVPFEDVADIAGVPECRLRRLVRPLFTIGFLCEPSPGHVAHSVMSKQFVTQPALLDAILFMSETLAPSASAMGTQTRRFGASEQAEDSAWNMAVGSDSPFAECLQQRPKVKRQLGAYLSYVSSSIDAGVEDTLTRMNWQNLGMATVVHVGAQSPSLVVALAPQFPSLRFLVQTEAKAESGGHQPCLDNHGISALKLASIPLHLRARITWGTRLSTATQPVLDAAVYLISIPFPSPQSPAMEITMRVAQALKAHVEVLRNNSDARLILTLPMSSATRSMDAAARAAVSLSDLSLLQLTNGGSLNMGEIRDLLRSRSDGLVVMREVRSPTNAVIAFEIQYRVDNDDNRY</sequence>
<gene>
    <name evidence="3" type="primary">aflS</name>
    <name type="ORF">F9C07_7810</name>
</gene>
<keyword id="KW-0238">DNA-binding</keyword>
<keyword id="KW-0539">Nucleus</keyword>
<keyword id="KW-1185">Reference proteome</keyword>
<keyword id="KW-0804">Transcription</keyword>
<keyword id="KW-0805">Transcription regulation</keyword>
<comment type="function">
    <text evidence="2">Transcription factor; part of the gene cluster that mediates the biosynthesis of aflatoxin, a polyketide-derived furanocoumarin which is part of the most toxic and carcinogenic compounds among the known mycotoxins (PubMed:38829003). AflS exhibits no DNA-binding capability on its own, but forms a complex with the other aflatoxin cluster transcription factor aflR and acts as a modulator of aflR's DNA-binding by decreasing its DNA-binding affinity (PubMed:38829003).</text>
</comment>
<comment type="subunit">
    <text evidence="2">Interacts with aflR.</text>
</comment>
<comment type="subcellular location">
    <subcellularLocation>
        <location evidence="2">Nucleus</location>
    </subcellularLocation>
</comment>
<organism>
    <name type="scientific">Aspergillus flavus (strain ATCC 200026 / FGSC A1120 / IAM 13836 / NRRL 3357 / JCM 12722 / SRRC 167)</name>
    <dbReference type="NCBI Taxonomy" id="332952"/>
    <lineage>
        <taxon>Eukaryota</taxon>
        <taxon>Fungi</taxon>
        <taxon>Dikarya</taxon>
        <taxon>Ascomycota</taxon>
        <taxon>Pezizomycotina</taxon>
        <taxon>Eurotiomycetes</taxon>
        <taxon>Eurotiomycetidae</taxon>
        <taxon>Eurotiales</taxon>
        <taxon>Aspergillaceae</taxon>
        <taxon>Aspergillus</taxon>
        <taxon>Aspergillus subgen. Circumdati</taxon>
    </lineage>
</organism>
<proteinExistence type="evidence at protein level"/>
<reference key="1">
    <citation type="journal article" date="2021" name="G3 (Bethesda)">
        <title>Chromosome assembled and annotated genome sequence of Aspergillus flavus NRRL 3357.</title>
        <authorList>
            <person name="Skerker J.M."/>
            <person name="Pianalto K.M."/>
            <person name="Mondo S.J."/>
            <person name="Yang K."/>
            <person name="Arkin A.P."/>
            <person name="Keller N.P."/>
            <person name="Grigoriev I.V."/>
            <person name="Glass N.L."/>
        </authorList>
    </citation>
    <scope>NUCLEOTIDE SEQUENCE [LARGE SCALE GENOMIC DNA]</scope>
    <source>
        <strain>ATCC 200026 / FGSC A1120 / IAM 13836 / NRRL 3357 / JCM 12722 / SRRC 167</strain>
    </source>
</reference>
<reference key="2">
    <citation type="journal article" date="2024" name="Biochem. J.">
        <title>Aflatoxin biosynthesis regulators AflR and AflS: DNA binding affinity, stoichiometry, and kinetics.</title>
        <authorList>
            <person name="Abbas A."/>
            <person name="Prajapati R.K."/>
            <person name="Aalto-Setaelae E."/>
            <person name="Baykov A.A."/>
            <person name="Malinen A.M."/>
        </authorList>
    </citation>
    <scope>FUNCTION</scope>
    <scope>INTERACTION WITH AFLR</scope>
    <scope>SUBCELLULAR LOCATION</scope>
</reference>
<accession>A0A7U2QXY7</accession>
<name>AFLS_ASPFN</name>